<keyword id="KW-0113">Calvin cycle</keyword>
<keyword id="KW-0120">Carbon dioxide fixation</keyword>
<keyword id="KW-0150">Chloroplast</keyword>
<keyword id="KW-0601">Photorespiration</keyword>
<keyword id="KW-0602">Photosynthesis</keyword>
<keyword id="KW-0934">Plastid</keyword>
<keyword id="KW-0809">Transit peptide</keyword>
<proteinExistence type="evidence at transcript level"/>
<comment type="function">
    <text evidence="1">RuBisCO catalyzes two reactions: the carboxylation of D-ribulose 1,5-bisphosphate, the primary event in carbon dioxide fixation, as well as the oxidative fragmentation of the pentose substrate. Both reactions occur simultaneously and in competition at the same active site. Although the small subunit is not catalytic it is essential for maximal activity.</text>
</comment>
<comment type="subunit">
    <text evidence="1">Heterohexadecamer of 8 large and 8 small subunits.</text>
</comment>
<comment type="subcellular location">
    <subcellularLocation>
        <location evidence="1">Plastid</location>
        <location evidence="1">Chloroplast</location>
    </subcellularLocation>
</comment>
<comment type="miscellaneous">
    <text evidence="1">The basic functional RuBisCO is composed of a large chain homodimer in a 'head-to-tail' conformation. In form I RuBisCO this homodimer is arranged in a barrel-like tetramer with the small subunits forming a tetrameric 'cap' on each end of the 'barrel'.</text>
</comment>
<comment type="similarity">
    <text evidence="1">Belongs to the RuBisCO small chain family.</text>
</comment>
<gene>
    <name evidence="1" type="primary">RBCS</name>
    <name type="synonym">RBCS1</name>
</gene>
<protein>
    <recommendedName>
        <fullName evidence="1">Ribulose bisphosphate carboxylase small subunit, chloroplastic</fullName>
        <shortName evidence="1">RuBisCO small subunit</shortName>
    </recommendedName>
</protein>
<sequence>MACSMISSATVAAVSRASPAQSSMVAPFTCLKSTSAFPVTQKTNNDITSIASNGGRVQCMQVWPPLGLKKFETLSYLPPLSSEQLAKEVDYLLRKNLIPCLEFELEHGFVYREHNRSPGYYDGRYWTMWKLPMFGCNDSSQVLKELEECKKAYPSAFIRIIGFDNKRQVQIISFIAYKPPGV</sequence>
<organism>
    <name type="scientific">Betula pendula</name>
    <name type="common">European white birch</name>
    <name type="synonym">Betula verrucosa</name>
    <dbReference type="NCBI Taxonomy" id="3505"/>
    <lineage>
        <taxon>Eukaryota</taxon>
        <taxon>Viridiplantae</taxon>
        <taxon>Streptophyta</taxon>
        <taxon>Embryophyta</taxon>
        <taxon>Tracheophyta</taxon>
        <taxon>Spermatophyta</taxon>
        <taxon>Magnoliopsida</taxon>
        <taxon>eudicotyledons</taxon>
        <taxon>Gunneridae</taxon>
        <taxon>Pentapetalae</taxon>
        <taxon>rosids</taxon>
        <taxon>fabids</taxon>
        <taxon>Fagales</taxon>
        <taxon>Betulaceae</taxon>
        <taxon>Betula</taxon>
    </lineage>
</organism>
<reference key="1">
    <citation type="online journal article" date="1997" name="Plant Gene Register">
        <title>A cDNA from Silver Birch (Betula pendula Roth) encoding the small subunit of ribulose-1,5-bisphosphate carboxylase/oxygenase.</title>
        <authorList>
            <person name="Valjakka M."/>
            <person name="Vapaavuori E."/>
            <person name="Haeggman H."/>
            <person name="Kangasjaervi J."/>
        </authorList>
        <locator>PGR97-100</locator>
    </citation>
    <scope>NUCLEOTIDE SEQUENCE [MRNA]</scope>
    <source>
        <tissue>Leaf</tissue>
    </source>
</reference>
<dbReference type="EMBL" id="Y07779">
    <property type="protein sequence ID" value="CAA69102.1"/>
    <property type="molecule type" value="mRNA"/>
</dbReference>
<dbReference type="SMR" id="Q96542"/>
<dbReference type="GO" id="GO:0009507">
    <property type="term" value="C:chloroplast"/>
    <property type="evidence" value="ECO:0007669"/>
    <property type="project" value="UniProtKB-SubCell"/>
</dbReference>
<dbReference type="GO" id="GO:0016984">
    <property type="term" value="F:ribulose-bisphosphate carboxylase activity"/>
    <property type="evidence" value="ECO:0007669"/>
    <property type="project" value="UniProtKB-UniRule"/>
</dbReference>
<dbReference type="GO" id="GO:0009853">
    <property type="term" value="P:photorespiration"/>
    <property type="evidence" value="ECO:0007669"/>
    <property type="project" value="UniProtKB-KW"/>
</dbReference>
<dbReference type="GO" id="GO:0019253">
    <property type="term" value="P:reductive pentose-phosphate cycle"/>
    <property type="evidence" value="ECO:0007669"/>
    <property type="project" value="UniProtKB-UniRule"/>
</dbReference>
<dbReference type="CDD" id="cd03527">
    <property type="entry name" value="RuBisCO_small"/>
    <property type="match status" value="1"/>
</dbReference>
<dbReference type="FunFam" id="3.30.190.10:FF:000001">
    <property type="entry name" value="Ribulose bisphosphate carboxylase small chain, chloroplastic"/>
    <property type="match status" value="1"/>
</dbReference>
<dbReference type="Gene3D" id="3.30.190.10">
    <property type="entry name" value="Ribulose bisphosphate carboxylase, small subunit"/>
    <property type="match status" value="1"/>
</dbReference>
<dbReference type="HAMAP" id="MF_00859">
    <property type="entry name" value="RuBisCO_S_bact"/>
    <property type="match status" value="1"/>
</dbReference>
<dbReference type="InterPro" id="IPR024681">
    <property type="entry name" value="RuBisCO_ssu"/>
</dbReference>
<dbReference type="InterPro" id="IPR000894">
    <property type="entry name" value="RuBisCO_ssu_dom"/>
</dbReference>
<dbReference type="InterPro" id="IPR024680">
    <property type="entry name" value="RuBisCO_ssu_N"/>
</dbReference>
<dbReference type="InterPro" id="IPR036385">
    <property type="entry name" value="RuBisCO_ssu_sf"/>
</dbReference>
<dbReference type="PANTHER" id="PTHR31262">
    <property type="entry name" value="RIBULOSE BISPHOSPHATE CARBOXYLASE SMALL CHAIN 1, CHLOROPLASTIC"/>
    <property type="match status" value="1"/>
</dbReference>
<dbReference type="PANTHER" id="PTHR31262:SF10">
    <property type="entry name" value="RIBULOSE BISPHOSPHATE CARBOXYLASE SMALL SUBUNIT 1A, CHLOROPLASTIC-RELATED"/>
    <property type="match status" value="1"/>
</dbReference>
<dbReference type="Pfam" id="PF12338">
    <property type="entry name" value="RbcS"/>
    <property type="match status" value="1"/>
</dbReference>
<dbReference type="Pfam" id="PF00101">
    <property type="entry name" value="RuBisCO_small"/>
    <property type="match status" value="1"/>
</dbReference>
<dbReference type="PRINTS" id="PR00152">
    <property type="entry name" value="RUBISCOSMALL"/>
</dbReference>
<dbReference type="SMART" id="SM00961">
    <property type="entry name" value="RuBisCO_small"/>
    <property type="match status" value="1"/>
</dbReference>
<dbReference type="SUPFAM" id="SSF55239">
    <property type="entry name" value="RuBisCO, small subunit"/>
    <property type="match status" value="1"/>
</dbReference>
<accession>Q96542</accession>
<feature type="transit peptide" description="Chloroplast" evidence="1">
    <location>
        <begin position="1"/>
        <end position="58"/>
    </location>
</feature>
<feature type="chain" id="PRO_0000031468" description="Ribulose bisphosphate carboxylase small subunit, chloroplastic" evidence="1">
    <location>
        <begin position="59"/>
        <end position="182"/>
    </location>
</feature>
<evidence type="ECO:0000255" key="1">
    <source>
        <dbReference type="HAMAP-Rule" id="MF_00860"/>
    </source>
</evidence>
<name>RBS_BETPN</name>